<protein>
    <recommendedName>
        <fullName evidence="1">Cytidine deaminase</fullName>
        <ecNumber evidence="1">3.5.4.5</ecNumber>
    </recommendedName>
    <alternativeName>
        <fullName evidence="1">Cytidine aminohydrolase</fullName>
        <shortName evidence="1">CDA</shortName>
    </alternativeName>
</protein>
<comment type="function">
    <text evidence="1">This enzyme scavenges exogenous and endogenous cytidine and 2'-deoxycytidine for UMP synthesis.</text>
</comment>
<comment type="catalytic activity">
    <reaction evidence="1">
        <text>cytidine + H2O + H(+) = uridine + NH4(+)</text>
        <dbReference type="Rhea" id="RHEA:16069"/>
        <dbReference type="ChEBI" id="CHEBI:15377"/>
        <dbReference type="ChEBI" id="CHEBI:15378"/>
        <dbReference type="ChEBI" id="CHEBI:16704"/>
        <dbReference type="ChEBI" id="CHEBI:17562"/>
        <dbReference type="ChEBI" id="CHEBI:28938"/>
        <dbReference type="EC" id="3.5.4.5"/>
    </reaction>
</comment>
<comment type="catalytic activity">
    <reaction evidence="1">
        <text>2'-deoxycytidine + H2O + H(+) = 2'-deoxyuridine + NH4(+)</text>
        <dbReference type="Rhea" id="RHEA:13433"/>
        <dbReference type="ChEBI" id="CHEBI:15377"/>
        <dbReference type="ChEBI" id="CHEBI:15378"/>
        <dbReference type="ChEBI" id="CHEBI:15698"/>
        <dbReference type="ChEBI" id="CHEBI:16450"/>
        <dbReference type="ChEBI" id="CHEBI:28938"/>
        <dbReference type="EC" id="3.5.4.5"/>
    </reaction>
</comment>
<comment type="cofactor">
    <cofactor evidence="1">
        <name>Zn(2+)</name>
        <dbReference type="ChEBI" id="CHEBI:29105"/>
    </cofactor>
    <text evidence="1">Binds 1 zinc ion.</text>
</comment>
<comment type="subunit">
    <text evidence="1">Homodimer.</text>
</comment>
<comment type="similarity">
    <text evidence="1">Belongs to the cytidine and deoxycytidylate deaminase family.</text>
</comment>
<reference key="1">
    <citation type="journal article" date="2009" name="J. Bacteriol.">
        <title>Genomic sequencing reveals regulatory mutations and recombinational events in the widely used MC4100 lineage of Escherichia coli K-12.</title>
        <authorList>
            <person name="Ferenci T."/>
            <person name="Zhou Z."/>
            <person name="Betteridge T."/>
            <person name="Ren Y."/>
            <person name="Liu Y."/>
            <person name="Feng L."/>
            <person name="Reeves P.R."/>
            <person name="Wang L."/>
        </authorList>
    </citation>
    <scope>NUCLEOTIDE SEQUENCE [LARGE SCALE GENOMIC DNA]</scope>
    <source>
        <strain>K12 / MC4100 / BW2952</strain>
    </source>
</reference>
<sequence>MHPRFQTAFAQLADNLQSALEPILADKYFPALLTGEQVSSLKSATGLDEDALAFALLPLAAACARTPLSNFNVGAIARGVSGTWYFGANMEFIGATMQQTVHAEQSAISHAWLSGEKALAAITVNYTPCGHCRQFMNELNSGLDLRIHLPGREAHALRDYLPDAFGPKDLEIKTLLMDEQDHGYALTGDALSQAAIAAANRSHMPYSKSPSGVALECKDGRIFSGSYAENAAFNPTLPPLQGALILLNLKGYDYPDIQRAVLAEKADAPLIQWDATSATLKALGCHSIDRVLLA</sequence>
<feature type="chain" id="PRO_1000215503" description="Cytidine deaminase">
    <location>
        <begin position="1"/>
        <end position="294"/>
    </location>
</feature>
<feature type="domain" description="CMP/dCMP-type deaminase 1" evidence="2">
    <location>
        <begin position="48"/>
        <end position="168"/>
    </location>
</feature>
<feature type="domain" description="CMP/dCMP-type deaminase 2" evidence="2">
    <location>
        <begin position="186"/>
        <end position="294"/>
    </location>
</feature>
<feature type="active site" description="Proton donor" evidence="1">
    <location>
        <position position="104"/>
    </location>
</feature>
<feature type="binding site" evidence="1">
    <location>
        <begin position="89"/>
        <end position="91"/>
    </location>
    <ligand>
        <name>substrate</name>
    </ligand>
</feature>
<feature type="binding site" evidence="1">
    <location>
        <position position="102"/>
    </location>
    <ligand>
        <name>Zn(2+)</name>
        <dbReference type="ChEBI" id="CHEBI:29105"/>
        <note>catalytic</note>
    </ligand>
</feature>
<feature type="binding site" evidence="1">
    <location>
        <position position="129"/>
    </location>
    <ligand>
        <name>Zn(2+)</name>
        <dbReference type="ChEBI" id="CHEBI:29105"/>
        <note>catalytic</note>
    </ligand>
</feature>
<feature type="binding site" evidence="1">
    <location>
        <position position="132"/>
    </location>
    <ligand>
        <name>Zn(2+)</name>
        <dbReference type="ChEBI" id="CHEBI:29105"/>
        <note>catalytic</note>
    </ligand>
</feature>
<evidence type="ECO:0000255" key="1">
    <source>
        <dbReference type="HAMAP-Rule" id="MF_01558"/>
    </source>
</evidence>
<evidence type="ECO:0000255" key="2">
    <source>
        <dbReference type="PROSITE-ProRule" id="PRU01083"/>
    </source>
</evidence>
<accession>C4ZSM3</accession>
<dbReference type="EC" id="3.5.4.5" evidence="1"/>
<dbReference type="EMBL" id="CP001396">
    <property type="protein sequence ID" value="ACR62697.1"/>
    <property type="molecule type" value="Genomic_DNA"/>
</dbReference>
<dbReference type="RefSeq" id="WP_000553555.1">
    <property type="nucleotide sequence ID" value="NC_012759.1"/>
</dbReference>
<dbReference type="SMR" id="C4ZSM3"/>
<dbReference type="GeneID" id="93775039"/>
<dbReference type="KEGG" id="ebw:BWG_1925"/>
<dbReference type="HOGENOM" id="CLU_052424_0_0_6"/>
<dbReference type="GO" id="GO:0005829">
    <property type="term" value="C:cytosol"/>
    <property type="evidence" value="ECO:0007669"/>
    <property type="project" value="TreeGrafter"/>
</dbReference>
<dbReference type="GO" id="GO:0004126">
    <property type="term" value="F:cytidine deaminase activity"/>
    <property type="evidence" value="ECO:0007669"/>
    <property type="project" value="UniProtKB-UniRule"/>
</dbReference>
<dbReference type="GO" id="GO:0042802">
    <property type="term" value="F:identical protein binding"/>
    <property type="evidence" value="ECO:0007669"/>
    <property type="project" value="UniProtKB-ARBA"/>
</dbReference>
<dbReference type="GO" id="GO:0008270">
    <property type="term" value="F:zinc ion binding"/>
    <property type="evidence" value="ECO:0007669"/>
    <property type="project" value="UniProtKB-UniRule"/>
</dbReference>
<dbReference type="GO" id="GO:0009972">
    <property type="term" value="P:cytidine deamination"/>
    <property type="evidence" value="ECO:0007669"/>
    <property type="project" value="InterPro"/>
</dbReference>
<dbReference type="CDD" id="cd01283">
    <property type="entry name" value="cytidine_deaminase"/>
    <property type="match status" value="2"/>
</dbReference>
<dbReference type="FunFam" id="3.40.140.10:FF:000006">
    <property type="entry name" value="Cytidine deaminase"/>
    <property type="match status" value="1"/>
</dbReference>
<dbReference type="FunFam" id="3.40.140.10:FF:000007">
    <property type="entry name" value="Cytidine deaminase"/>
    <property type="match status" value="1"/>
</dbReference>
<dbReference type="Gene3D" id="3.40.140.10">
    <property type="entry name" value="Cytidine Deaminase, domain 2"/>
    <property type="match status" value="2"/>
</dbReference>
<dbReference type="HAMAP" id="MF_01558">
    <property type="entry name" value="Cyt_deam"/>
    <property type="match status" value="1"/>
</dbReference>
<dbReference type="InterPro" id="IPR016192">
    <property type="entry name" value="APOBEC/CMP_deaminase_Zn-bd"/>
</dbReference>
<dbReference type="InterPro" id="IPR002125">
    <property type="entry name" value="CMP_dCMP_dom"/>
</dbReference>
<dbReference type="InterPro" id="IPR013171">
    <property type="entry name" value="Cyd/dCyd_deaminase_Zn-bd"/>
</dbReference>
<dbReference type="InterPro" id="IPR050202">
    <property type="entry name" value="Cyt/Deoxycyt_deaminase"/>
</dbReference>
<dbReference type="InterPro" id="IPR006263">
    <property type="entry name" value="Cyt_deam_dimer"/>
</dbReference>
<dbReference type="InterPro" id="IPR016193">
    <property type="entry name" value="Cytidine_deaminase-like"/>
</dbReference>
<dbReference type="InterPro" id="IPR020797">
    <property type="entry name" value="Cytidine_deaminase_bacteria"/>
</dbReference>
<dbReference type="NCBIfam" id="TIGR01355">
    <property type="entry name" value="cyt_deam_dimer"/>
    <property type="match status" value="1"/>
</dbReference>
<dbReference type="NCBIfam" id="NF006537">
    <property type="entry name" value="PRK09027.1"/>
    <property type="match status" value="1"/>
</dbReference>
<dbReference type="PANTHER" id="PTHR11644">
    <property type="entry name" value="CYTIDINE DEAMINASE"/>
    <property type="match status" value="1"/>
</dbReference>
<dbReference type="PANTHER" id="PTHR11644:SF2">
    <property type="entry name" value="CYTIDINE DEAMINASE"/>
    <property type="match status" value="1"/>
</dbReference>
<dbReference type="Pfam" id="PF00383">
    <property type="entry name" value="dCMP_cyt_deam_1"/>
    <property type="match status" value="1"/>
</dbReference>
<dbReference type="Pfam" id="PF08211">
    <property type="entry name" value="dCMP_cyt_deam_2"/>
    <property type="match status" value="1"/>
</dbReference>
<dbReference type="PIRSF" id="PIRSF006334">
    <property type="entry name" value="Cdd_plus_pseudo"/>
    <property type="match status" value="1"/>
</dbReference>
<dbReference type="SUPFAM" id="SSF53927">
    <property type="entry name" value="Cytidine deaminase-like"/>
    <property type="match status" value="2"/>
</dbReference>
<dbReference type="PROSITE" id="PS00903">
    <property type="entry name" value="CYT_DCMP_DEAMINASES_1"/>
    <property type="match status" value="1"/>
</dbReference>
<dbReference type="PROSITE" id="PS51747">
    <property type="entry name" value="CYT_DCMP_DEAMINASES_2"/>
    <property type="match status" value="2"/>
</dbReference>
<proteinExistence type="inferred from homology"/>
<keyword id="KW-0378">Hydrolase</keyword>
<keyword id="KW-0479">Metal-binding</keyword>
<keyword id="KW-0862">Zinc</keyword>
<name>CDD_ECOBW</name>
<gene>
    <name evidence="1" type="primary">cdd</name>
    <name type="ordered locus">BWG_1925</name>
</gene>
<organism>
    <name type="scientific">Escherichia coli (strain K12 / MC4100 / BW2952)</name>
    <dbReference type="NCBI Taxonomy" id="595496"/>
    <lineage>
        <taxon>Bacteria</taxon>
        <taxon>Pseudomonadati</taxon>
        <taxon>Pseudomonadota</taxon>
        <taxon>Gammaproteobacteria</taxon>
        <taxon>Enterobacterales</taxon>
        <taxon>Enterobacteriaceae</taxon>
        <taxon>Escherichia</taxon>
    </lineage>
</organism>